<proteinExistence type="inferred from homology"/>
<evidence type="ECO:0000250" key="1">
    <source>
        <dbReference type="UniProtKB" id="Q37935"/>
    </source>
</evidence>
<evidence type="ECO:0000305" key="2"/>
<evidence type="ECO:0000305" key="3">
    <source>
    </source>
</evidence>
<dbReference type="EMBL" id="M65239">
    <property type="status" value="NOT_ANNOTATED_CDS"/>
    <property type="molecule type" value="Genomic_DNA"/>
</dbReference>
<dbReference type="SMR" id="P0DOK7"/>
<dbReference type="GO" id="GO:0020002">
    <property type="term" value="C:host cell plasma membrane"/>
    <property type="evidence" value="ECO:0007669"/>
    <property type="project" value="UniProtKB-SubCell"/>
</dbReference>
<dbReference type="GO" id="GO:0016020">
    <property type="term" value="C:membrane"/>
    <property type="evidence" value="ECO:0007669"/>
    <property type="project" value="UniProtKB-KW"/>
</dbReference>
<dbReference type="GO" id="GO:0044659">
    <property type="term" value="P:viral release from host cell by cytolysis"/>
    <property type="evidence" value="ECO:0007669"/>
    <property type="project" value="InterPro"/>
</dbReference>
<dbReference type="InterPro" id="IPR010346">
    <property type="entry name" value="O-spanin"/>
</dbReference>
<dbReference type="Pfam" id="PF06085">
    <property type="entry name" value="Rz1"/>
    <property type="match status" value="1"/>
</dbReference>
<feature type="signal peptide" evidence="1">
    <location>
        <begin position="1"/>
        <end position="19"/>
    </location>
</feature>
<feature type="chain" id="PRO_0000447229" description="Spanin, outer lipoprotein subunit">
    <location>
        <begin position="20"/>
        <end position="62"/>
    </location>
</feature>
<feature type="topological domain" description="Periplasmic" evidence="1">
    <location>
        <begin position="20"/>
        <end position="62"/>
    </location>
</feature>
<feature type="region of interest" description="Proline-rich" evidence="1">
    <location>
        <begin position="32"/>
        <end position="44"/>
    </location>
</feature>
<feature type="lipid moiety-binding region" description="N-palmitoyl cysteine; by host" evidence="1">
    <location>
        <position position="20"/>
    </location>
</feature>
<feature type="lipid moiety-binding region" description="S-diacylglycerol cysteine; by host" evidence="1">
    <location>
        <position position="20"/>
    </location>
</feature>
<feature type="disulfide bond" description="Interchain" evidence="1">
    <location>
        <position position="29"/>
    </location>
</feature>
<accession>P0DOK7</accession>
<comment type="function">
    <text evidence="1 3">Component of the spanin complex that disrupts the host outer membrane and participates in cell lysis during virus exit (Probable). The spanin complex conducts the final step in host lysis by disrupting the outer membrane after holin and endolysin action have permeabilized the inner membrane and degraded the host peptidoglycans (By similarity). Host outer membrane disruption is due to local fusion between the inner and outer membrane performed by the spanin complex (By similarity).</text>
</comment>
<comment type="subunit">
    <text evidence="1">Homodimer; disulfide-linked. Interacts (via C-terminus) with the spanin inner membrane subunit (via C-terminus) (By similarity). Part of the spanin complex which spans the entire periplasmic space. The spanin complex is composed of one homodimer of the i-spanin linked by intermolecular disulfide bonds involving two Cys residues and one homodimer of the o-spanin covalently linked by an intermolecular disulfide bond involving one Cys (By similarity).</text>
</comment>
<comment type="subcellular location">
    <subcellularLocation>
        <location evidence="1">Host cell outer membrane</location>
        <topology evidence="1">Lipid-anchor</topology>
        <orientation evidence="1">Periplasmic side</orientation>
    </subcellularLocation>
</comment>
<comment type="domain">
    <text evidence="1">The proline-rich region is an essential fusion motif involved in host membrane fusion leading to lysis.</text>
</comment>
<comment type="similarity">
    <text evidence="2">Belongs to the Lambdavirus o-spanin family.</text>
</comment>
<name>SPAN2_BPP21</name>
<organismHost>
    <name type="scientific">Escherichia coli</name>
    <dbReference type="NCBI Taxonomy" id="562"/>
</organismHost>
<gene>
    <name type="primary">Rz1</name>
</gene>
<protein>
    <recommendedName>
        <fullName evidence="2">Spanin, outer lipoprotein subunit</fullName>
        <shortName evidence="1">o-spanin</shortName>
    </recommendedName>
    <alternativeName>
        <fullName evidence="1">Lysis protein Rz1</fullName>
    </alternativeName>
    <alternativeName>
        <fullName evidence="1">Outer membrane lipoprotein Rz1</fullName>
    </alternativeName>
</protein>
<sequence>MRKLKMMLCVMMLPLVVVGCTSKQSVSQCVKPRLPPAWIMQPPPDFTWQTPLNGIISPSERG</sequence>
<organism>
    <name type="scientific">Enterobacteria phage P21</name>
    <name type="common">Bacteriophage 21</name>
    <name type="synonym">Bacteriophage P21</name>
    <dbReference type="NCBI Taxonomy" id="10711"/>
    <lineage>
        <taxon>Viruses</taxon>
        <taxon>Duplodnaviria</taxon>
        <taxon>Heunggongvirae</taxon>
        <taxon>Uroviricota</taxon>
        <taxon>Caudoviricetes</taxon>
        <taxon>Lambdavirus</taxon>
        <taxon>Lambdavirus lambda</taxon>
    </lineage>
</organism>
<reference key="1">
    <citation type="journal article" date="1991" name="J. Bacteriol.">
        <title>Dual start motif in two lambdoid S genes unrelated to lambda S.</title>
        <authorList>
            <person name="Bonovich M.T."/>
            <person name="Young R."/>
        </authorList>
    </citation>
    <scope>NUCLEOTIDE SEQUENCE [GENOMIC DNA]</scope>
</reference>
<reference key="2">
    <citation type="journal article" date="2012" name="J. Bacteriol.">
        <title>The spanin complex is essential for lambda lysis.</title>
        <authorList>
            <person name="Berry J."/>
            <person name="Rajaure M."/>
            <person name="Pang T."/>
            <person name="Young R."/>
        </authorList>
    </citation>
    <scope>FUNCTION</scope>
</reference>
<keyword id="KW-0204">Cytolysis</keyword>
<keyword id="KW-1015">Disulfide bond</keyword>
<keyword id="KW-0578">Host cell lysis by virus</keyword>
<keyword id="KW-1033">Host cell outer membrane</keyword>
<keyword id="KW-1043">Host membrane</keyword>
<keyword id="KW-0449">Lipoprotein</keyword>
<keyword id="KW-0472">Membrane</keyword>
<keyword id="KW-0564">Palmitate</keyword>
<keyword id="KW-0732">Signal</keyword>
<keyword id="KW-1188">Viral release from host cell</keyword>